<reference key="1">
    <citation type="journal article" date="2002" name="Mol. Microbiol.">
        <title>Genome sequence of Streptococcus agalactiae, a pathogen causing invasive neonatal disease.</title>
        <authorList>
            <person name="Glaser P."/>
            <person name="Rusniok C."/>
            <person name="Buchrieser C."/>
            <person name="Chevalier F."/>
            <person name="Frangeul L."/>
            <person name="Msadek T."/>
            <person name="Zouine M."/>
            <person name="Couve E."/>
            <person name="Lalioui L."/>
            <person name="Poyart C."/>
            <person name="Trieu-Cuot P."/>
            <person name="Kunst F."/>
        </authorList>
    </citation>
    <scope>NUCLEOTIDE SEQUENCE [LARGE SCALE GENOMIC DNA]</scope>
    <source>
        <strain>NEM316</strain>
    </source>
</reference>
<name>MNME_STRA3</name>
<keyword id="KW-0963">Cytoplasm</keyword>
<keyword id="KW-0342">GTP-binding</keyword>
<keyword id="KW-0378">Hydrolase</keyword>
<keyword id="KW-0460">Magnesium</keyword>
<keyword id="KW-0479">Metal-binding</keyword>
<keyword id="KW-0547">Nucleotide-binding</keyword>
<keyword id="KW-0630">Potassium</keyword>
<keyword id="KW-0819">tRNA processing</keyword>
<dbReference type="EC" id="3.6.-.-" evidence="1"/>
<dbReference type="EMBL" id="AL766847">
    <property type="protein sequence ID" value="CAD46537.1"/>
    <property type="molecule type" value="Genomic_DNA"/>
</dbReference>
<dbReference type="RefSeq" id="WP_000028890.1">
    <property type="nucleotide sequence ID" value="NC_004368.1"/>
</dbReference>
<dbReference type="SMR" id="Q8E5T7"/>
<dbReference type="KEGG" id="san:gbs0893"/>
<dbReference type="eggNOG" id="COG0486">
    <property type="taxonomic scope" value="Bacteria"/>
</dbReference>
<dbReference type="HOGENOM" id="CLU_019624_4_1_9"/>
<dbReference type="Proteomes" id="UP000000823">
    <property type="component" value="Chromosome"/>
</dbReference>
<dbReference type="GO" id="GO:0005829">
    <property type="term" value="C:cytosol"/>
    <property type="evidence" value="ECO:0007669"/>
    <property type="project" value="TreeGrafter"/>
</dbReference>
<dbReference type="GO" id="GO:0005525">
    <property type="term" value="F:GTP binding"/>
    <property type="evidence" value="ECO:0007669"/>
    <property type="project" value="UniProtKB-UniRule"/>
</dbReference>
<dbReference type="GO" id="GO:0003924">
    <property type="term" value="F:GTPase activity"/>
    <property type="evidence" value="ECO:0007669"/>
    <property type="project" value="UniProtKB-UniRule"/>
</dbReference>
<dbReference type="GO" id="GO:0046872">
    <property type="term" value="F:metal ion binding"/>
    <property type="evidence" value="ECO:0007669"/>
    <property type="project" value="UniProtKB-KW"/>
</dbReference>
<dbReference type="GO" id="GO:0030488">
    <property type="term" value="P:tRNA methylation"/>
    <property type="evidence" value="ECO:0007669"/>
    <property type="project" value="TreeGrafter"/>
</dbReference>
<dbReference type="GO" id="GO:0002098">
    <property type="term" value="P:tRNA wobble uridine modification"/>
    <property type="evidence" value="ECO:0007669"/>
    <property type="project" value="TreeGrafter"/>
</dbReference>
<dbReference type="CDD" id="cd04164">
    <property type="entry name" value="trmE"/>
    <property type="match status" value="1"/>
</dbReference>
<dbReference type="CDD" id="cd14858">
    <property type="entry name" value="TrmE_N"/>
    <property type="match status" value="1"/>
</dbReference>
<dbReference type="FunFam" id="3.30.1360.120:FF:000003">
    <property type="entry name" value="tRNA modification GTPase MnmE"/>
    <property type="match status" value="1"/>
</dbReference>
<dbReference type="FunFam" id="3.40.50.300:FF:000494">
    <property type="entry name" value="tRNA modification GTPase MnmE"/>
    <property type="match status" value="1"/>
</dbReference>
<dbReference type="Gene3D" id="3.40.50.300">
    <property type="entry name" value="P-loop containing nucleotide triphosphate hydrolases"/>
    <property type="match status" value="1"/>
</dbReference>
<dbReference type="Gene3D" id="3.30.1360.120">
    <property type="entry name" value="Probable tRNA modification gtpase trme, domain 1"/>
    <property type="match status" value="1"/>
</dbReference>
<dbReference type="Gene3D" id="1.20.120.430">
    <property type="entry name" value="tRNA modification GTPase MnmE domain 2"/>
    <property type="match status" value="1"/>
</dbReference>
<dbReference type="HAMAP" id="MF_00379">
    <property type="entry name" value="GTPase_MnmE"/>
    <property type="match status" value="1"/>
</dbReference>
<dbReference type="InterPro" id="IPR031168">
    <property type="entry name" value="G_TrmE"/>
</dbReference>
<dbReference type="InterPro" id="IPR006073">
    <property type="entry name" value="GTP-bd"/>
</dbReference>
<dbReference type="InterPro" id="IPR018948">
    <property type="entry name" value="GTP-bd_TrmE_N"/>
</dbReference>
<dbReference type="InterPro" id="IPR004520">
    <property type="entry name" value="GTPase_MnmE"/>
</dbReference>
<dbReference type="InterPro" id="IPR027368">
    <property type="entry name" value="MnmE_dom2"/>
</dbReference>
<dbReference type="InterPro" id="IPR025867">
    <property type="entry name" value="MnmE_helical"/>
</dbReference>
<dbReference type="InterPro" id="IPR027417">
    <property type="entry name" value="P-loop_NTPase"/>
</dbReference>
<dbReference type="InterPro" id="IPR005225">
    <property type="entry name" value="Small_GTP-bd"/>
</dbReference>
<dbReference type="InterPro" id="IPR027266">
    <property type="entry name" value="TrmE/GcvT_dom1"/>
</dbReference>
<dbReference type="NCBIfam" id="TIGR00450">
    <property type="entry name" value="mnmE_trmE_thdF"/>
    <property type="match status" value="1"/>
</dbReference>
<dbReference type="NCBIfam" id="NF003661">
    <property type="entry name" value="PRK05291.1-3"/>
    <property type="match status" value="1"/>
</dbReference>
<dbReference type="NCBIfam" id="TIGR00231">
    <property type="entry name" value="small_GTP"/>
    <property type="match status" value="1"/>
</dbReference>
<dbReference type="PANTHER" id="PTHR42714">
    <property type="entry name" value="TRNA MODIFICATION GTPASE GTPBP3"/>
    <property type="match status" value="1"/>
</dbReference>
<dbReference type="PANTHER" id="PTHR42714:SF2">
    <property type="entry name" value="TRNA MODIFICATION GTPASE GTPBP3, MITOCHONDRIAL"/>
    <property type="match status" value="1"/>
</dbReference>
<dbReference type="Pfam" id="PF01926">
    <property type="entry name" value="MMR_HSR1"/>
    <property type="match status" value="1"/>
</dbReference>
<dbReference type="Pfam" id="PF12631">
    <property type="entry name" value="MnmE_helical"/>
    <property type="match status" value="1"/>
</dbReference>
<dbReference type="Pfam" id="PF10396">
    <property type="entry name" value="TrmE_N"/>
    <property type="match status" value="1"/>
</dbReference>
<dbReference type="SUPFAM" id="SSF52540">
    <property type="entry name" value="P-loop containing nucleoside triphosphate hydrolases"/>
    <property type="match status" value="1"/>
</dbReference>
<dbReference type="PROSITE" id="PS51709">
    <property type="entry name" value="G_TRME"/>
    <property type="match status" value="1"/>
</dbReference>
<organism>
    <name type="scientific">Streptococcus agalactiae serotype III (strain NEM316)</name>
    <dbReference type="NCBI Taxonomy" id="211110"/>
    <lineage>
        <taxon>Bacteria</taxon>
        <taxon>Bacillati</taxon>
        <taxon>Bacillota</taxon>
        <taxon>Bacilli</taxon>
        <taxon>Lactobacillales</taxon>
        <taxon>Streptococcaceae</taxon>
        <taxon>Streptococcus</taxon>
    </lineage>
</organism>
<gene>
    <name evidence="1" type="primary">mnmE</name>
    <name evidence="1" type="synonym">trmE</name>
    <name type="ordered locus">gbs0893</name>
</gene>
<comment type="function">
    <text evidence="1">Exhibits a very high intrinsic GTPase hydrolysis rate. Involved in the addition of a carboxymethylaminomethyl (cmnm) group at the wobble position (U34) of certain tRNAs, forming tRNA-cmnm(5)s(2)U34.</text>
</comment>
<comment type="cofactor">
    <cofactor evidence="1">
        <name>K(+)</name>
        <dbReference type="ChEBI" id="CHEBI:29103"/>
    </cofactor>
    <text evidence="1">Binds 1 potassium ion per subunit.</text>
</comment>
<comment type="subunit">
    <text evidence="1">Homodimer. Heterotetramer of two MnmE and two MnmG subunits.</text>
</comment>
<comment type="subcellular location">
    <subcellularLocation>
        <location evidence="1">Cytoplasm</location>
    </subcellularLocation>
</comment>
<comment type="similarity">
    <text evidence="1">Belongs to the TRAFAC class TrmE-Era-EngA-EngB-Septin-like GTPase superfamily. TrmE GTPase family.</text>
</comment>
<proteinExistence type="inferred from homology"/>
<feature type="chain" id="PRO_0000188926" description="tRNA modification GTPase MnmE">
    <location>
        <begin position="1"/>
        <end position="458"/>
    </location>
</feature>
<feature type="domain" description="TrmE-type G">
    <location>
        <begin position="224"/>
        <end position="378"/>
    </location>
</feature>
<feature type="binding site" evidence="1">
    <location>
        <position position="26"/>
    </location>
    <ligand>
        <name>(6S)-5-formyl-5,6,7,8-tetrahydrofolate</name>
        <dbReference type="ChEBI" id="CHEBI:57457"/>
    </ligand>
</feature>
<feature type="binding site" evidence="1">
    <location>
        <position position="88"/>
    </location>
    <ligand>
        <name>(6S)-5-formyl-5,6,7,8-tetrahydrofolate</name>
        <dbReference type="ChEBI" id="CHEBI:57457"/>
    </ligand>
</feature>
<feature type="binding site" evidence="1">
    <location>
        <position position="127"/>
    </location>
    <ligand>
        <name>(6S)-5-formyl-5,6,7,8-tetrahydrofolate</name>
        <dbReference type="ChEBI" id="CHEBI:57457"/>
    </ligand>
</feature>
<feature type="binding site" evidence="1">
    <location>
        <begin position="234"/>
        <end position="239"/>
    </location>
    <ligand>
        <name>GTP</name>
        <dbReference type="ChEBI" id="CHEBI:37565"/>
    </ligand>
</feature>
<feature type="binding site" evidence="1">
    <location>
        <position position="234"/>
    </location>
    <ligand>
        <name>K(+)</name>
        <dbReference type="ChEBI" id="CHEBI:29103"/>
    </ligand>
</feature>
<feature type="binding site" evidence="1">
    <location>
        <position position="238"/>
    </location>
    <ligand>
        <name>Mg(2+)</name>
        <dbReference type="ChEBI" id="CHEBI:18420"/>
    </ligand>
</feature>
<feature type="binding site" evidence="1">
    <location>
        <begin position="253"/>
        <end position="259"/>
    </location>
    <ligand>
        <name>GTP</name>
        <dbReference type="ChEBI" id="CHEBI:37565"/>
    </ligand>
</feature>
<feature type="binding site" evidence="1">
    <location>
        <position position="253"/>
    </location>
    <ligand>
        <name>K(+)</name>
        <dbReference type="ChEBI" id="CHEBI:29103"/>
    </ligand>
</feature>
<feature type="binding site" evidence="1">
    <location>
        <position position="255"/>
    </location>
    <ligand>
        <name>K(+)</name>
        <dbReference type="ChEBI" id="CHEBI:29103"/>
    </ligand>
</feature>
<feature type="binding site" evidence="1">
    <location>
        <position position="258"/>
    </location>
    <ligand>
        <name>K(+)</name>
        <dbReference type="ChEBI" id="CHEBI:29103"/>
    </ligand>
</feature>
<feature type="binding site" evidence="1">
    <location>
        <position position="259"/>
    </location>
    <ligand>
        <name>Mg(2+)</name>
        <dbReference type="ChEBI" id="CHEBI:18420"/>
    </ligand>
</feature>
<feature type="binding site" evidence="1">
    <location>
        <begin position="278"/>
        <end position="281"/>
    </location>
    <ligand>
        <name>GTP</name>
        <dbReference type="ChEBI" id="CHEBI:37565"/>
    </ligand>
</feature>
<feature type="binding site" evidence="1">
    <location>
        <position position="458"/>
    </location>
    <ligand>
        <name>(6S)-5-formyl-5,6,7,8-tetrahydrofolate</name>
        <dbReference type="ChEBI" id="CHEBI:57457"/>
    </ligand>
</feature>
<sequence length="458" mass="50904">MSITKEFDTIAAISTPLGEGAIGIVRISGTDALKIASKIYRGKDLSAIQSHTLNYGHIVDPDKNEILDEVMLGVMLAPKTFTREDVIEINTHGGIAVTNEILQLILRHGARMAEPGEFTKRAFLNGRVDLTQAEAVMDLIRAKTDKAMDIAVKQLDGSLKTLINNTRQEILNTLAQVEVNIDYPEYDDVEEMTTTLMREKTQEFQALMENLLRTARRGKILREGLSTAIIGRPNVGKSSLLNNLLREEKAIVTDIEGTTRDVIEEYVNIKGVPLKLVDTAGIRDTDDIVEKIGVERSKKALEEADLVLLVLNSSEPLTLQDRSLLELSKESNRIVLLNKTDLPQKIEVNELPENVIPISVLENENIDKIEERINDIFFDNAGMVEHDATYLSNARHISLIEKAVDSLKAVNEGLELGMPVDLLQVDMTRTWEILGEITGDAAPDELITQLFSQFCLGK</sequence>
<accession>Q8E5T7</accession>
<evidence type="ECO:0000255" key="1">
    <source>
        <dbReference type="HAMAP-Rule" id="MF_00379"/>
    </source>
</evidence>
<protein>
    <recommendedName>
        <fullName evidence="1">tRNA modification GTPase MnmE</fullName>
        <ecNumber evidence="1">3.6.-.-</ecNumber>
    </recommendedName>
</protein>